<gene>
    <name evidence="10" type="primary">Gart</name>
    <name evidence="10" type="synonym">ade3</name>
    <name evidence="10" type="ORF">CG31628</name>
</gene>
<protein>
    <recommendedName>
        <fullName>Trifunctional purine biosynthetic protein adenosine-3</fullName>
    </recommendedName>
    <domain>
        <recommendedName>
            <fullName>Phosphoribosylamine--glycine ligase</fullName>
            <ecNumber evidence="7">6.3.4.13</ecNumber>
        </recommendedName>
        <alternativeName>
            <fullName>Glycinamide ribonucleotide synthetase</fullName>
            <shortName>GARS</shortName>
        </alternativeName>
        <alternativeName>
            <fullName>Phosphoribosylglycinamide synthetase</fullName>
        </alternativeName>
    </domain>
    <domain>
        <recommendedName>
            <fullName>Phosphoribosylformylglycinamidine cyclo-ligase</fullName>
            <ecNumber evidence="7">6.3.3.1</ecNumber>
        </recommendedName>
        <alternativeName>
            <fullName>AIR synthase</fullName>
            <shortName>AIRS</shortName>
        </alternativeName>
        <alternativeName>
            <fullName>Phosphoribosyl-aminoimidazole synthetase</fullName>
        </alternativeName>
    </domain>
    <domain>
        <recommendedName>
            <fullName>Phosphoribosylglycinamide formyltransferase</fullName>
            <ecNumber evidence="7">2.1.2.2</ecNumber>
        </recommendedName>
        <alternativeName>
            <fullName>5'-phosphoribosylglycinamide transformylase</fullName>
        </alternativeName>
        <alternativeName>
            <fullName>GAR transformylase</fullName>
            <shortName>GART</shortName>
        </alternativeName>
    </domain>
</protein>
<accession>P00967</accession>
<accession>Q9VM53</accession>
<proteinExistence type="evidence at protein level"/>
<comment type="function">
    <text evidence="7">Trifunctional enzyme that catalyzes three distinct reactions as part of the 'de novo' inosine monophosphate biosynthetic pathway.</text>
</comment>
<comment type="catalytic activity">
    <reaction evidence="7">
        <text>5-phospho-beta-D-ribosylamine + glycine + ATP = N(1)-(5-phospho-beta-D-ribosyl)glycinamide + ADP + phosphate + H(+)</text>
        <dbReference type="Rhea" id="RHEA:17453"/>
        <dbReference type="ChEBI" id="CHEBI:15378"/>
        <dbReference type="ChEBI" id="CHEBI:30616"/>
        <dbReference type="ChEBI" id="CHEBI:43474"/>
        <dbReference type="ChEBI" id="CHEBI:57305"/>
        <dbReference type="ChEBI" id="CHEBI:58681"/>
        <dbReference type="ChEBI" id="CHEBI:143788"/>
        <dbReference type="ChEBI" id="CHEBI:456216"/>
        <dbReference type="EC" id="6.3.4.13"/>
    </reaction>
    <physiologicalReaction direction="left-to-right" evidence="9">
        <dbReference type="Rhea" id="RHEA:17454"/>
    </physiologicalReaction>
</comment>
<comment type="catalytic activity">
    <reaction evidence="7">
        <text>2-formamido-N(1)-(5-O-phospho-beta-D-ribosyl)acetamidine + ATP = 5-amino-1-(5-phospho-beta-D-ribosyl)imidazole + ADP + phosphate + H(+)</text>
        <dbReference type="Rhea" id="RHEA:23032"/>
        <dbReference type="ChEBI" id="CHEBI:15378"/>
        <dbReference type="ChEBI" id="CHEBI:30616"/>
        <dbReference type="ChEBI" id="CHEBI:43474"/>
        <dbReference type="ChEBI" id="CHEBI:137981"/>
        <dbReference type="ChEBI" id="CHEBI:147287"/>
        <dbReference type="ChEBI" id="CHEBI:456216"/>
        <dbReference type="EC" id="6.3.3.1"/>
    </reaction>
    <physiologicalReaction direction="left-to-right" evidence="9">
        <dbReference type="Rhea" id="RHEA:23033"/>
    </physiologicalReaction>
</comment>
<comment type="catalytic activity">
    <reaction evidence="7">
        <text>N(1)-(5-phospho-beta-D-ribosyl)glycinamide + (6R)-10-formyltetrahydrofolate = N(2)-formyl-N(1)-(5-phospho-beta-D-ribosyl)glycinamide + (6S)-5,6,7,8-tetrahydrofolate + H(+)</text>
        <dbReference type="Rhea" id="RHEA:15053"/>
        <dbReference type="ChEBI" id="CHEBI:15378"/>
        <dbReference type="ChEBI" id="CHEBI:57453"/>
        <dbReference type="ChEBI" id="CHEBI:143788"/>
        <dbReference type="ChEBI" id="CHEBI:147286"/>
        <dbReference type="ChEBI" id="CHEBI:195366"/>
        <dbReference type="EC" id="2.1.2.2"/>
    </reaction>
    <physiologicalReaction direction="left-to-right" evidence="9">
        <dbReference type="Rhea" id="RHEA:15054"/>
    </physiologicalReaction>
</comment>
<comment type="cofactor">
    <cofactor evidence="2 5">
        <name>Mg(2+)</name>
        <dbReference type="ChEBI" id="CHEBI:18420"/>
    </cofactor>
    <cofactor evidence="5">
        <name>Mn(2+)</name>
        <dbReference type="ChEBI" id="CHEBI:29035"/>
    </cofactor>
    <text evidence="5">Binds 1 magnesium or manganese ion per subunit.</text>
</comment>
<comment type="pathway">
    <text evidence="7">Purine metabolism; IMP biosynthesis via de novo pathway; 5-amino-1-(5-phospho-D-ribosyl)imidazole from N(2)-formyl-N(1)-(5-phospho-D-ribosyl)glycinamide: step 2/2.</text>
</comment>
<comment type="pathway">
    <text evidence="7">Purine metabolism; IMP biosynthesis via de novo pathway; N(1)-(5-phospho-D-ribosyl)glycinamide from 5-phospho-alpha-D-ribose 1-diphosphate: step 2/2.</text>
</comment>
<comment type="pathway">
    <text evidence="7">Purine metabolism; IMP biosynthesis via de novo pathway; N(2)-formyl-N(1)-(5-phospho-D-ribosyl)glycinamide from N(1)-(5-phospho-D-ribosyl)glycinamide (10-formyl THF route): step 1/1.</text>
</comment>
<comment type="subunit">
    <text evidence="4">Homodimer.</text>
</comment>
<comment type="alternative products">
    <event type="alternative splicing"/>
    <isoform>
        <id>P00967-1</id>
        <name>Long</name>
        <name>A</name>
        <name>4.7 kb</name>
        <sequence type="displayed"/>
    </isoform>
    <isoform>
        <id>P00967-2</id>
        <name>Short</name>
        <name>1.7 kb</name>
        <sequence type="described" ref="VSP_005512 VSP_005513"/>
    </isoform>
</comment>
<comment type="domain">
    <text evidence="9">The N-terminal ATP-grasp domain carries the phosphoribosylamine--glycine ligase activity.</text>
</comment>
<comment type="domain">
    <text evidence="9">The central AIRS domain carries the phosphoribosylformylglycinamidine cyclo-ligase activity.</text>
</comment>
<comment type="domain">
    <text evidence="9">The C-terminal GART domain carries the phosphoribosylglycinamide formyltransferase activity.</text>
</comment>
<comment type="similarity">
    <text evidence="8">In the N-terminal section; belongs to the GARS family.</text>
</comment>
<comment type="similarity">
    <text evidence="8">In the central section; belongs to the AIR synthase family.</text>
</comment>
<comment type="similarity">
    <text evidence="8">In the C-terminal section; belongs to the GART family.</text>
</comment>
<name>PUR2_DROME</name>
<evidence type="ECO:0000250" key="1">
    <source>
        <dbReference type="UniProtKB" id="P08179"/>
    </source>
</evidence>
<evidence type="ECO:0000250" key="2">
    <source>
        <dbReference type="UniProtKB" id="P15640"/>
    </source>
</evidence>
<evidence type="ECO:0000250" key="3">
    <source>
        <dbReference type="UniProtKB" id="P21872"/>
    </source>
</evidence>
<evidence type="ECO:0000250" key="4">
    <source>
        <dbReference type="UniProtKB" id="P22102"/>
    </source>
</evidence>
<evidence type="ECO:0000255" key="5">
    <source>
        <dbReference type="PROSITE-ProRule" id="PRU00409"/>
    </source>
</evidence>
<evidence type="ECO:0000269" key="6">
    <source>
    </source>
</evidence>
<evidence type="ECO:0000269" key="7">
    <source>
    </source>
</evidence>
<evidence type="ECO:0000305" key="8"/>
<evidence type="ECO:0000305" key="9">
    <source>
    </source>
</evidence>
<evidence type="ECO:0000312" key="10">
    <source>
        <dbReference type="FlyBase" id="FBgn0000053"/>
    </source>
</evidence>
<keyword id="KW-0025">Alternative splicing</keyword>
<keyword id="KW-0067">ATP-binding</keyword>
<keyword id="KW-0436">Ligase</keyword>
<keyword id="KW-0460">Magnesium</keyword>
<keyword id="KW-0464">Manganese</keyword>
<keyword id="KW-0479">Metal-binding</keyword>
<keyword id="KW-0511">Multifunctional enzyme</keyword>
<keyword id="KW-0547">Nucleotide-binding</keyword>
<keyword id="KW-0597">Phosphoprotein</keyword>
<keyword id="KW-0658">Purine biosynthesis</keyword>
<keyword id="KW-1185">Reference proteome</keyword>
<keyword id="KW-0808">Transferase</keyword>
<dbReference type="EC" id="6.3.4.13" evidence="7"/>
<dbReference type="EC" id="6.3.3.1" evidence="7"/>
<dbReference type="EC" id="2.1.2.2" evidence="7"/>
<dbReference type="EMBL" id="J02527">
    <property type="protein sequence ID" value="AAA28562.1"/>
    <property type="molecule type" value="Genomic_DNA"/>
</dbReference>
<dbReference type="EMBL" id="J02527">
    <property type="protein sequence ID" value="AAA28563.1"/>
    <property type="molecule type" value="Genomic_DNA"/>
</dbReference>
<dbReference type="EMBL" id="AE014134">
    <property type="protein sequence ID" value="AAF52474.2"/>
    <property type="molecule type" value="Genomic_DNA"/>
</dbReference>
<dbReference type="EMBL" id="X00041">
    <property type="protein sequence ID" value="CAA24923.1"/>
    <property type="molecule type" value="Genomic_DNA"/>
</dbReference>
<dbReference type="PIR" id="S01206">
    <property type="entry name" value="AJFFPM"/>
</dbReference>
<dbReference type="RefSeq" id="NP_001014477.1">
    <molecule id="P00967-2"/>
    <property type="nucleotide sequence ID" value="NM_001014477.2"/>
</dbReference>
<dbReference type="RefSeq" id="NP_001285698.1">
    <property type="nucleotide sequence ID" value="NM_001298769.1"/>
</dbReference>
<dbReference type="RefSeq" id="NP_523497.2">
    <property type="nucleotide sequence ID" value="NM_078773.3"/>
</dbReference>
<dbReference type="SMR" id="P00967"/>
<dbReference type="BioGRID" id="60135">
    <property type="interactions" value="2"/>
</dbReference>
<dbReference type="FunCoup" id="P00967">
    <property type="interactions" value="1839"/>
</dbReference>
<dbReference type="IntAct" id="P00967">
    <property type="interactions" value="19"/>
</dbReference>
<dbReference type="STRING" id="7227.FBpp0308722"/>
<dbReference type="GlyGen" id="P00967">
    <property type="glycosylation" value="1 site"/>
</dbReference>
<dbReference type="iPTMnet" id="P00967"/>
<dbReference type="PaxDb" id="7227-FBpp0079059"/>
<dbReference type="DNASU" id="33986"/>
<dbReference type="EnsemblMetazoa" id="FBtr0100353">
    <molecule id="P00967-2"/>
    <property type="protein sequence ID" value="FBpp0099760"/>
    <property type="gene ID" value="FBgn0000053"/>
</dbReference>
<dbReference type="GeneID" id="33986"/>
<dbReference type="KEGG" id="dme:Dmel_CG31628"/>
<dbReference type="AGR" id="FB:FBgn0000053"/>
<dbReference type="CTD" id="2618"/>
<dbReference type="FlyBase" id="FBgn0000053">
    <property type="gene designation" value="Gart"/>
</dbReference>
<dbReference type="VEuPathDB" id="VectorBase:FBgn0000053"/>
<dbReference type="eggNOG" id="KOG0237">
    <property type="taxonomic scope" value="Eukaryota"/>
</dbReference>
<dbReference type="eggNOG" id="KOG3076">
    <property type="taxonomic scope" value="Eukaryota"/>
</dbReference>
<dbReference type="HOGENOM" id="CLU_005361_0_1_1"/>
<dbReference type="InParanoid" id="P00967"/>
<dbReference type="OrthoDB" id="2018833at2759"/>
<dbReference type="PhylomeDB" id="P00967"/>
<dbReference type="Reactome" id="R-DME-73817">
    <property type="pathway name" value="Purine ribonucleoside monophosphate biosynthesis"/>
</dbReference>
<dbReference type="UniPathway" id="UPA00074">
    <property type="reaction ID" value="UER00125"/>
</dbReference>
<dbReference type="UniPathway" id="UPA00074">
    <property type="reaction ID" value="UER00126"/>
</dbReference>
<dbReference type="UniPathway" id="UPA00074">
    <property type="reaction ID" value="UER00129"/>
</dbReference>
<dbReference type="BioGRID-ORCS" id="33986">
    <property type="hits" value="1 hit in 3 CRISPR screens"/>
</dbReference>
<dbReference type="GenomeRNAi" id="33986"/>
<dbReference type="PRO" id="PR:P00967"/>
<dbReference type="Proteomes" id="UP000000803">
    <property type="component" value="Chromosome 2L"/>
</dbReference>
<dbReference type="Bgee" id="FBgn0000053">
    <property type="expression patterns" value="Expressed in fat body cell in body wall and 100 other cell types or tissues"/>
</dbReference>
<dbReference type="ExpressionAtlas" id="P00967">
    <property type="expression patterns" value="baseline and differential"/>
</dbReference>
<dbReference type="GO" id="GO:0005829">
    <property type="term" value="C:cytosol"/>
    <property type="evidence" value="ECO:0007005"/>
    <property type="project" value="FlyBase"/>
</dbReference>
<dbReference type="GO" id="GO:0005524">
    <property type="term" value="F:ATP binding"/>
    <property type="evidence" value="ECO:0007669"/>
    <property type="project" value="UniProtKB-KW"/>
</dbReference>
<dbReference type="GO" id="GO:0046872">
    <property type="term" value="F:metal ion binding"/>
    <property type="evidence" value="ECO:0007669"/>
    <property type="project" value="UniProtKB-KW"/>
</dbReference>
<dbReference type="GO" id="GO:0004637">
    <property type="term" value="F:phosphoribosylamine-glycine ligase activity"/>
    <property type="evidence" value="ECO:0000314"/>
    <property type="project" value="FlyBase"/>
</dbReference>
<dbReference type="GO" id="GO:0004641">
    <property type="term" value="F:phosphoribosylformylglycinamidine cyclo-ligase activity"/>
    <property type="evidence" value="ECO:0000314"/>
    <property type="project" value="FlyBase"/>
</dbReference>
<dbReference type="GO" id="GO:0004644">
    <property type="term" value="F:phosphoribosylglycinamide formyltransferase activity"/>
    <property type="evidence" value="ECO:0000314"/>
    <property type="project" value="FlyBase"/>
</dbReference>
<dbReference type="GO" id="GO:0006189">
    <property type="term" value="P:'de novo' IMP biosynthetic process"/>
    <property type="evidence" value="ECO:0007669"/>
    <property type="project" value="UniProtKB-UniPathway"/>
</dbReference>
<dbReference type="GO" id="GO:0046084">
    <property type="term" value="P:adenine biosynthetic process"/>
    <property type="evidence" value="ECO:0000318"/>
    <property type="project" value="GO_Central"/>
</dbReference>
<dbReference type="GO" id="GO:0009113">
    <property type="term" value="P:purine nucleobase biosynthetic process"/>
    <property type="evidence" value="ECO:0000315"/>
    <property type="project" value="UniProtKB"/>
</dbReference>
<dbReference type="GO" id="GO:0006164">
    <property type="term" value="P:purine nucleotide biosynthetic process"/>
    <property type="evidence" value="ECO:0000318"/>
    <property type="project" value="GO_Central"/>
</dbReference>
<dbReference type="CDD" id="cd08645">
    <property type="entry name" value="FMT_core_GART"/>
    <property type="match status" value="1"/>
</dbReference>
<dbReference type="CDD" id="cd02196">
    <property type="entry name" value="PurM"/>
    <property type="match status" value="2"/>
</dbReference>
<dbReference type="FunFam" id="3.40.50.20:FF:000006">
    <property type="entry name" value="Phosphoribosylamine--glycine ligase, chloroplastic"/>
    <property type="match status" value="1"/>
</dbReference>
<dbReference type="FunFam" id="3.30.1490.20:FF:000006">
    <property type="entry name" value="phosphoribosylamine--glycine ligase, chloroplastic-like"/>
    <property type="match status" value="1"/>
</dbReference>
<dbReference type="FunFam" id="3.30.1330.10:FF:000001">
    <property type="entry name" value="Phosphoribosylformylglycinamidine cyclo-ligase"/>
    <property type="match status" value="1"/>
</dbReference>
<dbReference type="FunFam" id="3.30.1330.10:FF:000024">
    <property type="entry name" value="Trifunctional purine biosynthetic protein adenosine-3"/>
    <property type="match status" value="1"/>
</dbReference>
<dbReference type="FunFam" id="3.30.470.20:FF:000018">
    <property type="entry name" value="Trifunctional purine biosynthetic protein adenosine-3"/>
    <property type="match status" value="1"/>
</dbReference>
<dbReference type="FunFam" id="3.40.50.170:FF:000006">
    <property type="entry name" value="Trifunctional purine biosynthetic protein adenosine-3"/>
    <property type="match status" value="1"/>
</dbReference>
<dbReference type="FunFam" id="3.90.600.10:FF:000001">
    <property type="entry name" value="Trifunctional purine biosynthetic protein adenosine-3"/>
    <property type="match status" value="1"/>
</dbReference>
<dbReference type="FunFam" id="3.90.650.10:FF:000019">
    <property type="entry name" value="Trifunctional purine biosynthetic protein adenosine-3"/>
    <property type="match status" value="1"/>
</dbReference>
<dbReference type="Gene3D" id="3.40.50.20">
    <property type="match status" value="1"/>
</dbReference>
<dbReference type="Gene3D" id="3.30.1490.20">
    <property type="entry name" value="ATP-grasp fold, A domain"/>
    <property type="match status" value="1"/>
</dbReference>
<dbReference type="Gene3D" id="3.30.470.20">
    <property type="entry name" value="ATP-grasp fold, B domain"/>
    <property type="match status" value="1"/>
</dbReference>
<dbReference type="Gene3D" id="3.40.50.170">
    <property type="entry name" value="Formyl transferase, N-terminal domain"/>
    <property type="match status" value="1"/>
</dbReference>
<dbReference type="Gene3D" id="3.90.600.10">
    <property type="entry name" value="Phosphoribosylglycinamide synthetase, C-terminal domain"/>
    <property type="match status" value="1"/>
</dbReference>
<dbReference type="Gene3D" id="3.90.650.10">
    <property type="entry name" value="PurM-like C-terminal domain"/>
    <property type="match status" value="2"/>
</dbReference>
<dbReference type="Gene3D" id="3.30.1330.10">
    <property type="entry name" value="PurM-like, N-terminal domain"/>
    <property type="match status" value="2"/>
</dbReference>
<dbReference type="HAMAP" id="MF_00741">
    <property type="entry name" value="AIRS"/>
    <property type="match status" value="1"/>
</dbReference>
<dbReference type="HAMAP" id="MF_00138">
    <property type="entry name" value="GARS"/>
    <property type="match status" value="1"/>
</dbReference>
<dbReference type="HAMAP" id="MF_01930">
    <property type="entry name" value="PurN"/>
    <property type="match status" value="1"/>
</dbReference>
<dbReference type="InterPro" id="IPR011761">
    <property type="entry name" value="ATP-grasp"/>
</dbReference>
<dbReference type="InterPro" id="IPR013815">
    <property type="entry name" value="ATP_grasp_subdomain_1"/>
</dbReference>
<dbReference type="InterPro" id="IPR002376">
    <property type="entry name" value="Formyl_transf_N"/>
</dbReference>
<dbReference type="InterPro" id="IPR036477">
    <property type="entry name" value="Formyl_transf_N_sf"/>
</dbReference>
<dbReference type="InterPro" id="IPR004607">
    <property type="entry name" value="GART"/>
</dbReference>
<dbReference type="InterPro" id="IPR001555">
    <property type="entry name" value="GART_AS"/>
</dbReference>
<dbReference type="InterPro" id="IPR016185">
    <property type="entry name" value="PreATP-grasp_dom_sf"/>
</dbReference>
<dbReference type="InterPro" id="IPR020561">
    <property type="entry name" value="PRibGlycinamid_synth_ATP-grasp"/>
</dbReference>
<dbReference type="InterPro" id="IPR000115">
    <property type="entry name" value="PRibGlycinamide_synth"/>
</dbReference>
<dbReference type="InterPro" id="IPR020560">
    <property type="entry name" value="PRibGlycinamide_synth_C-dom"/>
</dbReference>
<dbReference type="InterPro" id="IPR037123">
    <property type="entry name" value="PRibGlycinamide_synth_C_sf"/>
</dbReference>
<dbReference type="InterPro" id="IPR020559">
    <property type="entry name" value="PRibGlycinamide_synth_CS"/>
</dbReference>
<dbReference type="InterPro" id="IPR020562">
    <property type="entry name" value="PRibGlycinamide_synth_N"/>
</dbReference>
<dbReference type="InterPro" id="IPR010918">
    <property type="entry name" value="PurM-like_C_dom"/>
</dbReference>
<dbReference type="InterPro" id="IPR036676">
    <property type="entry name" value="PurM-like_C_sf"/>
</dbReference>
<dbReference type="InterPro" id="IPR016188">
    <property type="entry name" value="PurM-like_N"/>
</dbReference>
<dbReference type="InterPro" id="IPR036921">
    <property type="entry name" value="PurM-like_N_sf"/>
</dbReference>
<dbReference type="InterPro" id="IPR004733">
    <property type="entry name" value="PurM_cligase"/>
</dbReference>
<dbReference type="InterPro" id="IPR011054">
    <property type="entry name" value="Rudment_hybrid_motif"/>
</dbReference>
<dbReference type="NCBIfam" id="TIGR00877">
    <property type="entry name" value="purD"/>
    <property type="match status" value="1"/>
</dbReference>
<dbReference type="NCBIfam" id="TIGR00878">
    <property type="entry name" value="purM"/>
    <property type="match status" value="2"/>
</dbReference>
<dbReference type="NCBIfam" id="TIGR00639">
    <property type="entry name" value="PurN"/>
    <property type="match status" value="1"/>
</dbReference>
<dbReference type="PANTHER" id="PTHR10520:SF12">
    <property type="entry name" value="TRIFUNCTIONAL PURINE BIOSYNTHETIC PROTEIN ADENOSINE-3"/>
    <property type="match status" value="1"/>
</dbReference>
<dbReference type="PANTHER" id="PTHR10520">
    <property type="entry name" value="TRIFUNCTIONAL PURINE BIOSYNTHETIC PROTEIN ADENOSINE-3-RELATED"/>
    <property type="match status" value="1"/>
</dbReference>
<dbReference type="Pfam" id="PF00586">
    <property type="entry name" value="AIRS"/>
    <property type="match status" value="2"/>
</dbReference>
<dbReference type="Pfam" id="PF02769">
    <property type="entry name" value="AIRS_C"/>
    <property type="match status" value="2"/>
</dbReference>
<dbReference type="Pfam" id="PF00551">
    <property type="entry name" value="Formyl_trans_N"/>
    <property type="match status" value="1"/>
</dbReference>
<dbReference type="Pfam" id="PF01071">
    <property type="entry name" value="GARS_A"/>
    <property type="match status" value="1"/>
</dbReference>
<dbReference type="Pfam" id="PF02843">
    <property type="entry name" value="GARS_C"/>
    <property type="match status" value="1"/>
</dbReference>
<dbReference type="Pfam" id="PF02844">
    <property type="entry name" value="GARS_N"/>
    <property type="match status" value="1"/>
</dbReference>
<dbReference type="SMART" id="SM01209">
    <property type="entry name" value="GARS_A"/>
    <property type="match status" value="1"/>
</dbReference>
<dbReference type="SMART" id="SM01210">
    <property type="entry name" value="GARS_C"/>
    <property type="match status" value="1"/>
</dbReference>
<dbReference type="SUPFAM" id="SSF53328">
    <property type="entry name" value="Formyltransferase"/>
    <property type="match status" value="1"/>
</dbReference>
<dbReference type="SUPFAM" id="SSF56059">
    <property type="entry name" value="Glutathione synthetase ATP-binding domain-like"/>
    <property type="match status" value="1"/>
</dbReference>
<dbReference type="SUPFAM" id="SSF52440">
    <property type="entry name" value="PreATP-grasp domain"/>
    <property type="match status" value="1"/>
</dbReference>
<dbReference type="SUPFAM" id="SSF56042">
    <property type="entry name" value="PurM C-terminal domain-like"/>
    <property type="match status" value="2"/>
</dbReference>
<dbReference type="SUPFAM" id="SSF55326">
    <property type="entry name" value="PurM N-terminal domain-like"/>
    <property type="match status" value="2"/>
</dbReference>
<dbReference type="SUPFAM" id="SSF51246">
    <property type="entry name" value="Rudiment single hybrid motif"/>
    <property type="match status" value="1"/>
</dbReference>
<dbReference type="PROSITE" id="PS50975">
    <property type="entry name" value="ATP_GRASP"/>
    <property type="match status" value="1"/>
</dbReference>
<dbReference type="PROSITE" id="PS00184">
    <property type="entry name" value="GARS"/>
    <property type="match status" value="1"/>
</dbReference>
<dbReference type="PROSITE" id="PS00373">
    <property type="entry name" value="GART"/>
    <property type="match status" value="1"/>
</dbReference>
<sequence>MSHRVLVIGSGGREHAICWKLSQSPKVAQIYALPGSHGIQLVEKCRNLDAKTLDPKDFEAIAKWSKENQIALVVVGPEDPLALGLGDVLQSAGIPCFGPGKQGAQIEADKKWAKDFMLRHGIPTARYESFTDTEKAKAFIRSAPYPALVVKAAGLAAGKGVVVAANAKEACQAVDEILGDLKYGQAGATLVVEELLEGEEVSVLAFTDGKSVRAMLPAQDHKRLGNGDTGPNTGGMGAYCPCPLISQPALELVQKAVLERAVQGLIKERINYQGVLYAGLMLTRDGPRVLEFNCRFGDPETQVILPLLESDLFDVMEACCSGKLDKIPLQWRNGVSAVGVILASAGYPETSTKGCIISGLPAANTPTQLVFHSGLAVNAQKEALTNGGRVLIAIALDGSLKEAAAKATKLAGSISFSGSGAQYRTDIAQKAFKIASASTPGLSYKDSGVDIDAGDALVQRIKPLSRGTQRPGVIGGLGGFGGLFRLKELTYKEPVIAEATQGVGAKIHLALTHEFYENVGYDLFALAANDVLEVGAEPVAFLDYIACGKLQVPLAAQLVKGMADGCRDARCALVGGETAEMPSLYAPGQHDMAGYCVGIVEHSRILPRFDLYQPGDLLIGLPSSGLHCAGFNEILTQLAASKVNLRERSPVDGGDDGLTLAHVLATPTQLYVQQLLPHLQKGDEIKSVAHVTHGLLNDILRLLPDGFETTLDFGAVPVPKIFGWLAGKLKLSAQTILERHNCGIGMVLILPQSSQLWRTSLPGAKVLGVLQRRSKVSGSPVQVRNFVEQLEKVASPFGGLGDRELPEELKKLPSNSDLSAPREECFENAAGRRLTRIPTHYKDPILILGTDGVGTKLKIAQQTNRNTSVGIDLVAMCVNDILCNGAEPISFSSYYACGHWQEQLAKGVHSGVQEGARQANSSFIDSHSAALPLLYEPQVYDLAGFALGIAEHTGILPLLAEIQPGDVLIGLPSSGVHSNGFSLVHAVLKRVGLGLHDKAPFSDKTLGEELLVPTKIYVKALSTLLSRGKHGIKALAHITGGGLSENIPRVLRKDLAVRLDANKFQLPPVFAWLAAAGNISSTELQRTYNCGLGMVLVVAPTEVEDVLKELRYPQRAAVVGEVVARKDPKKSQVVVQNFEASLARTQKMLSQRRKRVAVLISGTGSNLQALIDATRDSAQGIHADVVLVISNKPGVLGLQRATQAGIPSLVISHKDFASREVYDAELTRNLKAARVDLICLAGFMRVLSAPFVREWRGRLVNIHPSLLPKYPGLHVQKQALEAGEKESGCTVHFVDEGVDTGAIIVQAAVPILPDDDEDSLTQRIHKAEHWAFPRALAMLVNGTALISPEVSSQ</sequence>
<feature type="chain" id="PRO_0000074934" description="Trifunctional purine biosynthetic protein adenosine-3">
    <location>
        <begin position="1"/>
        <end position="1353"/>
    </location>
</feature>
<feature type="domain" description="ATP-grasp" evidence="5">
    <location>
        <begin position="114"/>
        <end position="321"/>
    </location>
</feature>
<feature type="region of interest" description="AIRS domain" evidence="3">
    <location>
        <begin position="441"/>
        <end position="1155"/>
    </location>
</feature>
<feature type="region of interest" description="GART domain" evidence="3">
    <location>
        <begin position="1153"/>
        <end position="1353"/>
    </location>
</feature>
<feature type="active site" description="Proton donor" evidence="1">
    <location>
        <position position="1263"/>
    </location>
</feature>
<feature type="binding site" evidence="4">
    <location>
        <begin position="193"/>
        <end position="196"/>
    </location>
    <ligand>
        <name>ATP</name>
        <dbReference type="ChEBI" id="CHEBI:30616"/>
    </ligand>
</feature>
<feature type="binding site" evidence="4">
    <location>
        <position position="200"/>
    </location>
    <ligand>
        <name>ATP</name>
        <dbReference type="ChEBI" id="CHEBI:30616"/>
    </ligand>
</feature>
<feature type="binding site" evidence="4">
    <location>
        <position position="223"/>
    </location>
    <ligand>
        <name>ATP</name>
        <dbReference type="ChEBI" id="CHEBI:30616"/>
    </ligand>
</feature>
<feature type="binding site" evidence="4">
    <location>
        <position position="232"/>
    </location>
    <ligand>
        <name>ATP</name>
        <dbReference type="ChEBI" id="CHEBI:30616"/>
    </ligand>
</feature>
<feature type="binding site" evidence="5">
    <location>
        <position position="291"/>
    </location>
    <ligand>
        <name>Mg(2+)</name>
        <dbReference type="ChEBI" id="CHEBI:18420"/>
    </ligand>
</feature>
<feature type="binding site" evidence="5">
    <location>
        <position position="293"/>
    </location>
    <ligand>
        <name>Mg(2+)</name>
        <dbReference type="ChEBI" id="CHEBI:18420"/>
    </ligand>
</feature>
<feature type="binding site" evidence="4">
    <location>
        <begin position="1164"/>
        <end position="1166"/>
    </location>
    <ligand>
        <name>N(1)-(5-phospho-beta-D-ribosyl)glycinamide</name>
        <dbReference type="ChEBI" id="CHEBI:143788"/>
    </ligand>
</feature>
<feature type="binding site" evidence="4">
    <location>
        <position position="1219"/>
    </location>
    <ligand>
        <name>(6R)-10-formyltetrahydrofolate</name>
        <dbReference type="ChEBI" id="CHEBI:195366"/>
    </ligand>
</feature>
<feature type="binding site" evidence="4">
    <location>
        <begin position="1244"/>
        <end position="1247"/>
    </location>
    <ligand>
        <name>(6R)-10-formyltetrahydrofolate</name>
        <dbReference type="ChEBI" id="CHEBI:195366"/>
    </ligand>
</feature>
<feature type="binding site" evidence="4">
    <location>
        <position position="1261"/>
    </location>
    <ligand>
        <name>(6R)-10-formyltetrahydrofolate</name>
        <dbReference type="ChEBI" id="CHEBI:195366"/>
    </ligand>
</feature>
<feature type="binding site" evidence="4">
    <location>
        <begin position="1295"/>
        <end position="1299"/>
    </location>
    <ligand>
        <name>(6R)-10-formyltetrahydrofolate</name>
        <dbReference type="ChEBI" id="CHEBI:195366"/>
    </ligand>
</feature>
<feature type="binding site" evidence="4">
    <location>
        <begin position="1325"/>
        <end position="1328"/>
    </location>
    <ligand>
        <name>N(1)-(5-phospho-beta-D-ribosyl)glycinamide</name>
        <dbReference type="ChEBI" id="CHEBI:143788"/>
    </ligand>
</feature>
<feature type="site" description="Raises pKa of active site His" evidence="1">
    <location>
        <position position="1299"/>
    </location>
</feature>
<feature type="modified residue" description="Phosphoserine" evidence="6">
    <location>
        <position position="814"/>
    </location>
</feature>
<feature type="modified residue" description="Phosphoserine" evidence="6">
    <location>
        <position position="816"/>
    </location>
</feature>
<feature type="splice variant" id="VSP_005512" description="In isoform Short." evidence="8">
    <original>I</original>
    <variation>M</variation>
    <location>
        <position position="434"/>
    </location>
</feature>
<feature type="splice variant" id="VSP_005513" description="In isoform Short." evidence="8">
    <location>
        <begin position="435"/>
        <end position="1353"/>
    </location>
</feature>
<feature type="mutagenesis site" description="Loss of phosphoribosylglycinamide formyltransferase enzymatic activity." evidence="7">
    <original>G</original>
    <variation>S</variation>
    <location>
        <position position="1164"/>
    </location>
</feature>
<feature type="sequence conflict" description="In Ref. 2; AAF52474." evidence="8" ref="2">
    <original>F</original>
    <variation>L</variation>
    <location>
        <position position="515"/>
    </location>
</feature>
<feature type="sequence conflict" description="In Ref. 2; AAF52474." evidence="8" ref="2">
    <original>H</original>
    <variation>Q</variation>
    <location>
        <position position="602"/>
    </location>
</feature>
<feature type="sequence conflict" description="In Ref. 2; AAF52474." evidence="8" ref="2">
    <original>G</original>
    <variation>E</variation>
    <location>
        <position position="907"/>
    </location>
</feature>
<feature type="sequence conflict" description="In Ref. 2; AAF52474." evidence="8" ref="2">
    <original>A</original>
    <variation>D</variation>
    <location>
        <position position="960"/>
    </location>
</feature>
<feature type="sequence conflict" description="In Ref. 2; AAF52474." evidence="8" ref="2">
    <original>P</original>
    <variation>T</variation>
    <location>
        <position position="1193"/>
    </location>
</feature>
<reference key="1">
    <citation type="journal article" date="1987" name="Genetics">
        <title>Conserved arrangement of nested genes at the Drosophila Gart locus.</title>
        <authorList>
            <person name="Henikoff S."/>
            <person name="Eghtedarzadeh M.K."/>
        </authorList>
    </citation>
    <scope>NUCLEOTIDE SEQUENCE [GENOMIC DNA] (ISOFORMS LONG AND SHORT)</scope>
    <source>
        <strain>Canton-S</strain>
        <tissue>Embryo</tissue>
    </source>
</reference>
<reference key="2">
    <citation type="journal article" date="2000" name="Science">
        <title>The genome sequence of Drosophila melanogaster.</title>
        <authorList>
            <person name="Adams M.D."/>
            <person name="Celniker S.E."/>
            <person name="Holt R.A."/>
            <person name="Evans C.A."/>
            <person name="Gocayne J.D."/>
            <person name="Amanatides P.G."/>
            <person name="Scherer S.E."/>
            <person name="Li P.W."/>
            <person name="Hoskins R.A."/>
            <person name="Galle R.F."/>
            <person name="George R.A."/>
            <person name="Lewis S.E."/>
            <person name="Richards S."/>
            <person name="Ashburner M."/>
            <person name="Henderson S.N."/>
            <person name="Sutton G.G."/>
            <person name="Wortman J.R."/>
            <person name="Yandell M.D."/>
            <person name="Zhang Q."/>
            <person name="Chen L.X."/>
            <person name="Brandon R.C."/>
            <person name="Rogers Y.-H.C."/>
            <person name="Blazej R.G."/>
            <person name="Champe M."/>
            <person name="Pfeiffer B.D."/>
            <person name="Wan K.H."/>
            <person name="Doyle C."/>
            <person name="Baxter E.G."/>
            <person name="Helt G."/>
            <person name="Nelson C.R."/>
            <person name="Miklos G.L.G."/>
            <person name="Abril J.F."/>
            <person name="Agbayani A."/>
            <person name="An H.-J."/>
            <person name="Andrews-Pfannkoch C."/>
            <person name="Baldwin D."/>
            <person name="Ballew R.M."/>
            <person name="Basu A."/>
            <person name="Baxendale J."/>
            <person name="Bayraktaroglu L."/>
            <person name="Beasley E.M."/>
            <person name="Beeson K.Y."/>
            <person name="Benos P.V."/>
            <person name="Berman B.P."/>
            <person name="Bhandari D."/>
            <person name="Bolshakov S."/>
            <person name="Borkova D."/>
            <person name="Botchan M.R."/>
            <person name="Bouck J."/>
            <person name="Brokstein P."/>
            <person name="Brottier P."/>
            <person name="Burtis K.C."/>
            <person name="Busam D.A."/>
            <person name="Butler H."/>
            <person name="Cadieu E."/>
            <person name="Center A."/>
            <person name="Chandra I."/>
            <person name="Cherry J.M."/>
            <person name="Cawley S."/>
            <person name="Dahlke C."/>
            <person name="Davenport L.B."/>
            <person name="Davies P."/>
            <person name="de Pablos B."/>
            <person name="Delcher A."/>
            <person name="Deng Z."/>
            <person name="Mays A.D."/>
            <person name="Dew I."/>
            <person name="Dietz S.M."/>
            <person name="Dodson K."/>
            <person name="Doup L.E."/>
            <person name="Downes M."/>
            <person name="Dugan-Rocha S."/>
            <person name="Dunkov B.C."/>
            <person name="Dunn P."/>
            <person name="Durbin K.J."/>
            <person name="Evangelista C.C."/>
            <person name="Ferraz C."/>
            <person name="Ferriera S."/>
            <person name="Fleischmann W."/>
            <person name="Fosler C."/>
            <person name="Gabrielian A.E."/>
            <person name="Garg N.S."/>
            <person name="Gelbart W.M."/>
            <person name="Glasser K."/>
            <person name="Glodek A."/>
            <person name="Gong F."/>
            <person name="Gorrell J.H."/>
            <person name="Gu Z."/>
            <person name="Guan P."/>
            <person name="Harris M."/>
            <person name="Harris N.L."/>
            <person name="Harvey D.A."/>
            <person name="Heiman T.J."/>
            <person name="Hernandez J.R."/>
            <person name="Houck J."/>
            <person name="Hostin D."/>
            <person name="Houston K.A."/>
            <person name="Howland T.J."/>
            <person name="Wei M.-H."/>
            <person name="Ibegwam C."/>
            <person name="Jalali M."/>
            <person name="Kalush F."/>
            <person name="Karpen G.H."/>
            <person name="Ke Z."/>
            <person name="Kennison J.A."/>
            <person name="Ketchum K.A."/>
            <person name="Kimmel B.E."/>
            <person name="Kodira C.D."/>
            <person name="Kraft C.L."/>
            <person name="Kravitz S."/>
            <person name="Kulp D."/>
            <person name="Lai Z."/>
            <person name="Lasko P."/>
            <person name="Lei Y."/>
            <person name="Levitsky A.A."/>
            <person name="Li J.H."/>
            <person name="Li Z."/>
            <person name="Liang Y."/>
            <person name="Lin X."/>
            <person name="Liu X."/>
            <person name="Mattei B."/>
            <person name="McIntosh T.C."/>
            <person name="McLeod M.P."/>
            <person name="McPherson D."/>
            <person name="Merkulov G."/>
            <person name="Milshina N.V."/>
            <person name="Mobarry C."/>
            <person name="Morris J."/>
            <person name="Moshrefi A."/>
            <person name="Mount S.M."/>
            <person name="Moy M."/>
            <person name="Murphy B."/>
            <person name="Murphy L."/>
            <person name="Muzny D.M."/>
            <person name="Nelson D.L."/>
            <person name="Nelson D.R."/>
            <person name="Nelson K.A."/>
            <person name="Nixon K."/>
            <person name="Nusskern D.R."/>
            <person name="Pacleb J.M."/>
            <person name="Palazzolo M."/>
            <person name="Pittman G.S."/>
            <person name="Pan S."/>
            <person name="Pollard J."/>
            <person name="Puri V."/>
            <person name="Reese M.G."/>
            <person name="Reinert K."/>
            <person name="Remington K."/>
            <person name="Saunders R.D.C."/>
            <person name="Scheeler F."/>
            <person name="Shen H."/>
            <person name="Shue B.C."/>
            <person name="Siden-Kiamos I."/>
            <person name="Simpson M."/>
            <person name="Skupski M.P."/>
            <person name="Smith T.J."/>
            <person name="Spier E."/>
            <person name="Spradling A.C."/>
            <person name="Stapleton M."/>
            <person name="Strong R."/>
            <person name="Sun E."/>
            <person name="Svirskas R."/>
            <person name="Tector C."/>
            <person name="Turner R."/>
            <person name="Venter E."/>
            <person name="Wang A.H."/>
            <person name="Wang X."/>
            <person name="Wang Z.-Y."/>
            <person name="Wassarman D.A."/>
            <person name="Weinstock G.M."/>
            <person name="Weissenbach J."/>
            <person name="Williams S.M."/>
            <person name="Woodage T."/>
            <person name="Worley K.C."/>
            <person name="Wu D."/>
            <person name="Yang S."/>
            <person name="Yao Q.A."/>
            <person name="Ye J."/>
            <person name="Yeh R.-F."/>
            <person name="Zaveri J.S."/>
            <person name="Zhan M."/>
            <person name="Zhang G."/>
            <person name="Zhao Q."/>
            <person name="Zheng L."/>
            <person name="Zheng X.H."/>
            <person name="Zhong F.N."/>
            <person name="Zhong W."/>
            <person name="Zhou X."/>
            <person name="Zhu S.C."/>
            <person name="Zhu X."/>
            <person name="Smith H.O."/>
            <person name="Gibbs R.A."/>
            <person name="Myers E.W."/>
            <person name="Rubin G.M."/>
            <person name="Venter J.C."/>
        </authorList>
    </citation>
    <scope>NUCLEOTIDE SEQUENCE [LARGE SCALE GENOMIC DNA]</scope>
    <source>
        <strain>Berkeley</strain>
    </source>
</reference>
<reference key="3">
    <citation type="journal article" date="2002" name="Genome Biol.">
        <title>Annotation of the Drosophila melanogaster euchromatic genome: a systematic review.</title>
        <authorList>
            <person name="Misra S."/>
            <person name="Crosby M.A."/>
            <person name="Mungall C.J."/>
            <person name="Matthews B.B."/>
            <person name="Campbell K.S."/>
            <person name="Hradecky P."/>
            <person name="Huang Y."/>
            <person name="Kaminker J.S."/>
            <person name="Millburn G.H."/>
            <person name="Prochnik S.E."/>
            <person name="Smith C.D."/>
            <person name="Tupy J.L."/>
            <person name="Whitfield E.J."/>
            <person name="Bayraktaroglu L."/>
            <person name="Berman B.P."/>
            <person name="Bettencourt B.R."/>
            <person name="Celniker S.E."/>
            <person name="de Grey A.D.N.J."/>
            <person name="Drysdale R.A."/>
            <person name="Harris N.L."/>
            <person name="Richter J."/>
            <person name="Russo S."/>
            <person name="Schroeder A.J."/>
            <person name="Shu S.Q."/>
            <person name="Stapleton M."/>
            <person name="Yamada C."/>
            <person name="Ashburner M."/>
            <person name="Gelbart W.M."/>
            <person name="Rubin G.M."/>
            <person name="Lewis S.E."/>
        </authorList>
    </citation>
    <scope>GENOME REANNOTATION</scope>
    <source>
        <strain>Berkeley</strain>
    </source>
</reference>
<reference key="4">
    <citation type="journal article" date="1983" name="Cell">
        <title>A Drosophila metabolic gene transcript is alternatively processed.</title>
        <authorList>
            <person name="Henikoff S."/>
            <person name="Sloan J.S."/>
            <person name="Kelly J.D."/>
        </authorList>
    </citation>
    <scope>NUCLEOTIDE SEQUENCE [GENOMIC DNA] OF 60-1353</scope>
    <scope>ALTERNATIVE SPLICING</scope>
    <source>
        <strain>Canton-S</strain>
        <strain>Oregon-R</strain>
        <tissue>Embryo</tissue>
    </source>
</reference>
<reference key="5">
    <citation type="journal article" date="1983" name="Nucleic Acids Res.">
        <title>Sequence of a Drosophila DNA segment that functions in Saccharomyces cerevisiae and its regulation by a yeast promoter.</title>
        <authorList>
            <person name="Henikoff S."/>
            <person name="Furlong C.E."/>
        </authorList>
    </citation>
    <scope>NUCLEOTIDE SEQUENCE [GENOMIC DNA] OF 1147-1353 (ISOFORM LONG)</scope>
    <source>
        <strain>Oregon-R</strain>
        <tissue>Embryo</tissue>
    </source>
</reference>
<reference key="6">
    <citation type="journal article" date="1986" name="Proc. Natl. Acad. Sci. U.S.A.">
        <title>Two Drosophila melanogaster mutations block successive steps of de novo purine synthesis.</title>
        <authorList>
            <person name="Henikoff S."/>
            <person name="Nash D."/>
            <person name="Hards R."/>
            <person name="Bleskan J."/>
            <person name="Woolford J.F."/>
            <person name="Naguib F."/>
            <person name="Patterson D."/>
        </authorList>
    </citation>
    <scope>FUNCTION</scope>
    <scope>CATALYTIC ACTIVITY</scope>
    <scope>PATHWAY</scope>
    <scope>MUTAGENESIS OF GLY-1164</scope>
</reference>
<reference key="7">
    <citation type="journal article" date="2008" name="J. Proteome Res.">
        <title>Phosphoproteome analysis of Drosophila melanogaster embryos.</title>
        <authorList>
            <person name="Zhai B."/>
            <person name="Villen J."/>
            <person name="Beausoleil S.A."/>
            <person name="Mintseris J."/>
            <person name="Gygi S.P."/>
        </authorList>
    </citation>
    <scope>PHOSPHORYLATION [LARGE SCALE ANALYSIS] AT SER-814 AND SER-816</scope>
    <scope>IDENTIFICATION BY MASS SPECTROMETRY</scope>
    <source>
        <tissue>Embryo</tissue>
    </source>
</reference>
<organism>
    <name type="scientific">Drosophila melanogaster</name>
    <name type="common">Fruit fly</name>
    <dbReference type="NCBI Taxonomy" id="7227"/>
    <lineage>
        <taxon>Eukaryota</taxon>
        <taxon>Metazoa</taxon>
        <taxon>Ecdysozoa</taxon>
        <taxon>Arthropoda</taxon>
        <taxon>Hexapoda</taxon>
        <taxon>Insecta</taxon>
        <taxon>Pterygota</taxon>
        <taxon>Neoptera</taxon>
        <taxon>Endopterygota</taxon>
        <taxon>Diptera</taxon>
        <taxon>Brachycera</taxon>
        <taxon>Muscomorpha</taxon>
        <taxon>Ephydroidea</taxon>
        <taxon>Drosophilidae</taxon>
        <taxon>Drosophila</taxon>
        <taxon>Sophophora</taxon>
    </lineage>
</organism>